<accession>P31723</accession>
<protein>
    <recommendedName>
        <fullName>Mannosyl-oligosaccharide alpha-1,2-mannosidase</fullName>
        <ecNumber evidence="4">3.2.1.113</ecNumber>
    </recommendedName>
    <alternativeName>
        <fullName>Man(9)-alpha-mannosidase</fullName>
    </alternativeName>
</protein>
<feature type="signal peptide" evidence="4">
    <location>
        <begin position="1"/>
        <end position="35"/>
    </location>
</feature>
<feature type="chain" id="PRO_0000012085" description="Mannosyl-oligosaccharide alpha-1,2-mannosidase">
    <location>
        <begin position="36"/>
        <end position="511"/>
    </location>
</feature>
<feature type="active site" description="Proton donor" evidence="3">
    <location>
        <position position="375"/>
    </location>
</feature>
<feature type="binding site" evidence="2">
    <location>
        <position position="501"/>
    </location>
    <ligand>
        <name>Ca(2+)</name>
        <dbReference type="ChEBI" id="CHEBI:29108"/>
    </ligand>
</feature>
<feature type="glycosylation site" description="N-linked (GlcNAc...) asparagine" evidence="3 7 8 9 10 11">
    <location>
        <position position="182"/>
    </location>
</feature>
<feature type="glycosylation site" description="N-linked (GlcNAc...) asparagine" evidence="3 7 8 9 10 11">
    <location>
        <position position="366"/>
    </location>
</feature>
<feature type="glycosylation site" description="N-linked (GlcNAc...) asparagine" evidence="3 7 8 9 10 11">
    <location>
        <position position="438"/>
    </location>
</feature>
<feature type="disulfide bond" evidence="3 7 8 9 10 11">
    <location>
        <begin position="332"/>
        <end position="361"/>
    </location>
</feature>
<feature type="sequence conflict" description="In Ref. 2; AA sequence." evidence="5" ref="2">
    <original>R</original>
    <variation>H</variation>
    <location>
        <position position="407"/>
    </location>
</feature>
<feature type="helix" evidence="13">
    <location>
        <begin position="37"/>
        <end position="58"/>
    </location>
</feature>
<feature type="turn" evidence="13">
    <location>
        <begin position="59"/>
        <end position="61"/>
    </location>
</feature>
<feature type="strand" evidence="13">
    <location>
        <begin position="62"/>
        <end position="66"/>
    </location>
</feature>
<feature type="turn" evidence="13">
    <location>
        <begin position="67"/>
        <end position="70"/>
    </location>
</feature>
<feature type="strand" evidence="13">
    <location>
        <begin position="71"/>
        <end position="73"/>
    </location>
</feature>
<feature type="turn" evidence="13">
    <location>
        <begin position="75"/>
        <end position="78"/>
    </location>
</feature>
<feature type="helix" evidence="13">
    <location>
        <begin position="81"/>
        <end position="93"/>
    </location>
</feature>
<feature type="helix" evidence="13">
    <location>
        <begin position="96"/>
        <end position="108"/>
    </location>
</feature>
<feature type="helix" evidence="13">
    <location>
        <begin position="120"/>
        <end position="139"/>
    </location>
</feature>
<feature type="turn" evidence="13">
    <location>
        <begin position="140"/>
        <end position="144"/>
    </location>
</feature>
<feature type="helix" evidence="13">
    <location>
        <begin position="149"/>
        <end position="166"/>
    </location>
</feature>
<feature type="helix" evidence="13">
    <location>
        <begin position="167"/>
        <end position="170"/>
    </location>
</feature>
<feature type="strand" evidence="13">
    <location>
        <begin position="172"/>
        <end position="175"/>
    </location>
</feature>
<feature type="strand" evidence="13">
    <location>
        <begin position="179"/>
        <end position="181"/>
    </location>
</feature>
<feature type="turn" evidence="13">
    <location>
        <begin position="183"/>
        <end position="185"/>
    </location>
</feature>
<feature type="strand" evidence="13">
    <location>
        <begin position="192"/>
        <end position="195"/>
    </location>
</feature>
<feature type="helix" evidence="13">
    <location>
        <begin position="196"/>
        <end position="200"/>
    </location>
</feature>
<feature type="helix" evidence="13">
    <location>
        <begin position="203"/>
        <end position="213"/>
    </location>
</feature>
<feature type="helix" evidence="13">
    <location>
        <begin position="217"/>
        <end position="230"/>
    </location>
</feature>
<feature type="helix" evidence="13">
    <location>
        <begin position="235"/>
        <end position="237"/>
    </location>
</feature>
<feature type="strand" evidence="13">
    <location>
        <begin position="246"/>
        <end position="249"/>
    </location>
</feature>
<feature type="turn" evidence="13">
    <location>
        <begin position="250"/>
        <end position="252"/>
    </location>
</feature>
<feature type="turn" evidence="13">
    <location>
        <begin position="264"/>
        <end position="266"/>
    </location>
</feature>
<feature type="helix" evidence="13">
    <location>
        <begin position="267"/>
        <end position="279"/>
    </location>
</feature>
<feature type="turn" evidence="13">
    <location>
        <begin position="281"/>
        <end position="284"/>
    </location>
</feature>
<feature type="helix" evidence="13">
    <location>
        <begin position="285"/>
        <end position="301"/>
    </location>
</feature>
<feature type="strand" evidence="13">
    <location>
        <begin position="317"/>
        <end position="319"/>
    </location>
</feature>
<feature type="strand" evidence="13">
    <location>
        <begin position="322"/>
        <end position="324"/>
    </location>
</feature>
<feature type="strand" evidence="13">
    <location>
        <begin position="326"/>
        <end position="328"/>
    </location>
</feature>
<feature type="helix" evidence="13">
    <location>
        <begin position="330"/>
        <end position="333"/>
    </location>
</feature>
<feature type="helix" evidence="13">
    <location>
        <begin position="334"/>
        <end position="345"/>
    </location>
</feature>
<feature type="helix" evidence="13">
    <location>
        <begin position="348"/>
        <end position="366"/>
    </location>
</feature>
<feature type="strand" evidence="13">
    <location>
        <begin position="368"/>
        <end position="371"/>
    </location>
</feature>
<feature type="strand" evidence="13">
    <location>
        <begin position="375"/>
        <end position="378"/>
    </location>
</feature>
<feature type="turn" evidence="12">
    <location>
        <begin position="381"/>
        <end position="383"/>
    </location>
</feature>
<feature type="helix" evidence="13">
    <location>
        <begin position="386"/>
        <end position="388"/>
    </location>
</feature>
<feature type="helix" evidence="13">
    <location>
        <begin position="389"/>
        <end position="395"/>
    </location>
</feature>
<feature type="strand" evidence="13">
    <location>
        <begin position="398"/>
        <end position="401"/>
    </location>
</feature>
<feature type="helix" evidence="13">
    <location>
        <begin position="409"/>
        <end position="421"/>
    </location>
</feature>
<feature type="helix" evidence="13">
    <location>
        <begin position="424"/>
        <end position="440"/>
    </location>
</feature>
<feature type="strand" evidence="13">
    <location>
        <begin position="444"/>
        <end position="447"/>
    </location>
</feature>
<feature type="helix" evidence="13">
    <location>
        <begin position="456"/>
        <end position="458"/>
    </location>
</feature>
<feature type="strand" evidence="13">
    <location>
        <begin position="459"/>
        <end position="463"/>
    </location>
</feature>
<feature type="helix" evidence="13">
    <location>
        <begin position="468"/>
        <end position="471"/>
    </location>
</feature>
<feature type="helix" evidence="13">
    <location>
        <begin position="473"/>
        <end position="479"/>
    </location>
</feature>
<feature type="strand" evidence="13">
    <location>
        <begin position="496"/>
        <end position="499"/>
    </location>
</feature>
<feature type="strand" evidence="13">
    <location>
        <begin position="505"/>
        <end position="507"/>
    </location>
</feature>
<name>MAN12_PENCI</name>
<proteinExistence type="evidence at protein level"/>
<comment type="function">
    <text evidence="4">Involved in the maturation of Asn-linked oligosaccharides. Progressively trim alpha-1,2-linked mannose residues from Man(9)GlcNAc(2) to produce Man(5)GlcNAc(2).</text>
</comment>
<comment type="catalytic activity">
    <reaction evidence="4">
        <text>N(4)-(alpha-D-Man-(1-&gt;2)-alpha-D-Man-(1-&gt;2)-alpha-D-Man-(1-&gt;3)-[alpha-D-Man-(1-&gt;2)-alpha-D-Man-(1-&gt;3)-[alpha-D-Man-(1-&gt;2)-alpha-D-Man-(1-&gt;6)]-alpha-D-Man-(1-&gt;6)]-beta-D-Man-(1-&gt;4)-beta-D-GlcNAc-(1-&gt;4)-beta-D-GlcNAc)-L-asparaginyl-[protein] (N-glucan mannose isomer 9A1,2,3B1,2,3) + 4 H2O = N(4)-(alpha-D-Man-(1-&gt;3)-[alpha-D-Man-(1-&gt;3)-[alpha-D-Man-(1-&gt;6)]-alpha-D-Man-(1-&gt;6)]-beta-D-Man-(1-&gt;4)-beta-D-GlcNAc-(1-&gt;4)-beta-D-GlcNAc)-L-asparaginyl-[protein] (N-glucan mannose isomer 5A1,2) + 4 beta-D-mannose</text>
        <dbReference type="Rhea" id="RHEA:56008"/>
        <dbReference type="Rhea" id="RHEA-COMP:14356"/>
        <dbReference type="Rhea" id="RHEA-COMP:14367"/>
        <dbReference type="ChEBI" id="CHEBI:15377"/>
        <dbReference type="ChEBI" id="CHEBI:28563"/>
        <dbReference type="ChEBI" id="CHEBI:59087"/>
        <dbReference type="ChEBI" id="CHEBI:139493"/>
        <dbReference type="EC" id="3.2.1.113"/>
    </reaction>
</comment>
<comment type="catalytic activity">
    <reaction evidence="4">
        <text>N(4)-(alpha-D-Man-(1-&gt;2)-alpha-D-Man-(1-&gt;2)-alpha-D-Man-(1-&gt;3)-[alpha-D-Man-(1-&gt;3)-[alpha-D-Man-(1-&gt;2)-alpha-D-Man-(1-&gt;6)]-alpha-D-Man-(1-&gt;6)]-beta-D-Man-(1-&gt;4)-beta-D-GlcNAc-(1-&gt;4)-beta-D-GlcNAc)-L-asparaginyl-[protein] (N-glucan mannose isomer 8A1,2,3B1,3) + 3 H2O = N(4)-(alpha-D-Man-(1-&gt;3)-[alpha-D-Man-(1-&gt;3)-[alpha-D-Man-(1-&gt;6)]-alpha-D-Man-(1-&gt;6)]-beta-D-Man-(1-&gt;4)-beta-D-GlcNAc-(1-&gt;4)-beta-D-GlcNAc)-L-asparaginyl-[protein] (N-glucan mannose isomer 5A1,2) + 3 beta-D-mannose</text>
        <dbReference type="Rhea" id="RHEA:56028"/>
        <dbReference type="Rhea" id="RHEA-COMP:14358"/>
        <dbReference type="Rhea" id="RHEA-COMP:14367"/>
        <dbReference type="ChEBI" id="CHEBI:15377"/>
        <dbReference type="ChEBI" id="CHEBI:28563"/>
        <dbReference type="ChEBI" id="CHEBI:59087"/>
        <dbReference type="ChEBI" id="CHEBI:60628"/>
        <dbReference type="EC" id="3.2.1.113"/>
    </reaction>
</comment>
<comment type="cofactor">
    <cofactor evidence="1">
        <name>Ca(2+)</name>
        <dbReference type="ChEBI" id="CHEBI:29108"/>
    </cofactor>
</comment>
<comment type="biophysicochemical properties">
    <phDependence>
        <text evidence="4">Optimum pH is 5.0.</text>
    </phDependence>
</comment>
<comment type="pathway">
    <text evidence="4">Protein modification; protein glycosylation.</text>
</comment>
<comment type="subunit">
    <text evidence="3">Homodimer.</text>
</comment>
<comment type="subcellular location">
    <subcellularLocation>
        <location evidence="6">Secreted</location>
    </subcellularLocation>
</comment>
<comment type="miscellaneous">
    <text evidence="3">The enzyme is inactivated by reaction of carbodiimide reagents with Asp-375. Since the antibiotic 1-deoxymannojirimycin (DMM) acts as a competitive inhibitor, and it blocks the reaction with carbodiimides, Asp-375 is established as an active site. High activity in presence of EDTA.</text>
</comment>
<comment type="similarity">
    <text evidence="5">Belongs to the glycosyl hydrolase 47 family.</text>
</comment>
<organism>
    <name type="scientific">Penicillium citrinum</name>
    <dbReference type="NCBI Taxonomy" id="5077"/>
    <lineage>
        <taxon>Eukaryota</taxon>
        <taxon>Fungi</taxon>
        <taxon>Dikarya</taxon>
        <taxon>Ascomycota</taxon>
        <taxon>Pezizomycotina</taxon>
        <taxon>Eurotiomycetes</taxon>
        <taxon>Eurotiomycetidae</taxon>
        <taxon>Eurotiales</taxon>
        <taxon>Aspergillaceae</taxon>
        <taxon>Penicillium</taxon>
    </lineage>
</organism>
<sequence length="511" mass="56570">MRLPVSFPLTVLSLLGSTIAHPYGETEAVLRSEPKSNQAKADAVKEAFQHAWNGYMKYAFPHDELTPVSNGHADSRNGWGASAVDALSTAVIMGKADVVNAILEHVADIDFSKTSDTVSLFETTIRYLAGMLSGYDLLQGPAKNLVDNQDLIDGLLDQSRNLADVLKFAFDTPSGVPYNNINITSHGNDGATTNGLAVTGTLVLEWTRLSDLTGDEEYAKLSQKAESYLLKPQPSSSEPFPGLVGSSININDGQFADSRVSWNGGDDSFYEYLIKMYVYDPKRFETYKDRWVLAAESTIKHLKSHPKSRPDLTFLSSYSNRNYDLSSQHLTCFDGGSFLLGGTVLDRQDFIDFGLELVDGCEATYNSTLTKIGPDSWGWDPKKVPSDQKEFYEKAGFYISSGSYVLRPEVIESFYYAHRVTGKEIYRDWVWNAFVAINSTCRTDSGFAAVSDVNKANGGSKYDNQESFLFAEVMKYSYLAHSEDAAWQVQKGGKNTFVYNTEAHPISVARN</sequence>
<dbReference type="EC" id="3.2.1.113" evidence="4"/>
<dbReference type="EMBL" id="D45839">
    <property type="protein sequence ID" value="BAA08275.1"/>
    <property type="molecule type" value="Genomic_DNA"/>
</dbReference>
<dbReference type="PIR" id="S30362">
    <property type="entry name" value="S30362"/>
</dbReference>
<dbReference type="PIR" id="S58766">
    <property type="entry name" value="S58766"/>
</dbReference>
<dbReference type="PDB" id="1KKT">
    <property type="method" value="X-ray"/>
    <property type="resolution" value="2.20 A"/>
    <property type="chains" value="A/B=1-511"/>
</dbReference>
<dbReference type="PDB" id="1KRE">
    <property type="method" value="X-ray"/>
    <property type="resolution" value="2.20 A"/>
    <property type="chains" value="A/B=1-511"/>
</dbReference>
<dbReference type="PDB" id="1KRF">
    <property type="method" value="X-ray"/>
    <property type="resolution" value="2.20 A"/>
    <property type="chains" value="A/B=1-511"/>
</dbReference>
<dbReference type="PDB" id="2RI8">
    <property type="method" value="X-ray"/>
    <property type="resolution" value="2.16 A"/>
    <property type="chains" value="A/B=36-510"/>
</dbReference>
<dbReference type="PDB" id="2RI9">
    <property type="method" value="X-ray"/>
    <property type="resolution" value="1.95 A"/>
    <property type="chains" value="A/B=36-510"/>
</dbReference>
<dbReference type="PDBsum" id="1KKT"/>
<dbReference type="PDBsum" id="1KRE"/>
<dbReference type="PDBsum" id="1KRF"/>
<dbReference type="PDBsum" id="2RI8"/>
<dbReference type="PDBsum" id="2RI9"/>
<dbReference type="SMR" id="P31723"/>
<dbReference type="DrugBank" id="DB03206">
    <property type="generic name" value="Duvoglustat"/>
</dbReference>
<dbReference type="DrugBank" id="DB02742">
    <property type="generic name" value="Kifunensine"/>
</dbReference>
<dbReference type="CAZy" id="GH47">
    <property type="family name" value="Glycoside Hydrolase Family 47"/>
</dbReference>
<dbReference type="GlyCosmos" id="P31723">
    <property type="glycosylation" value="3 sites, No reported glycans"/>
</dbReference>
<dbReference type="iPTMnet" id="P31723"/>
<dbReference type="BRENDA" id="3.2.1.113">
    <property type="organism ID" value="4608"/>
</dbReference>
<dbReference type="UniPathway" id="UPA00378"/>
<dbReference type="EvolutionaryTrace" id="P31723"/>
<dbReference type="GO" id="GO:0005783">
    <property type="term" value="C:endoplasmic reticulum"/>
    <property type="evidence" value="ECO:0007669"/>
    <property type="project" value="TreeGrafter"/>
</dbReference>
<dbReference type="GO" id="GO:0005576">
    <property type="term" value="C:extracellular region"/>
    <property type="evidence" value="ECO:0007669"/>
    <property type="project" value="UniProtKB-SubCell"/>
</dbReference>
<dbReference type="GO" id="GO:0016020">
    <property type="term" value="C:membrane"/>
    <property type="evidence" value="ECO:0007669"/>
    <property type="project" value="InterPro"/>
</dbReference>
<dbReference type="GO" id="GO:0005509">
    <property type="term" value="F:calcium ion binding"/>
    <property type="evidence" value="ECO:0007669"/>
    <property type="project" value="InterPro"/>
</dbReference>
<dbReference type="GO" id="GO:0004571">
    <property type="term" value="F:mannosyl-oligosaccharide 1,2-alpha-mannosidase activity"/>
    <property type="evidence" value="ECO:0007669"/>
    <property type="project" value="UniProtKB-EC"/>
</dbReference>
<dbReference type="GO" id="GO:0005975">
    <property type="term" value="P:carbohydrate metabolic process"/>
    <property type="evidence" value="ECO:0007669"/>
    <property type="project" value="InterPro"/>
</dbReference>
<dbReference type="GO" id="GO:0036503">
    <property type="term" value="P:ERAD pathway"/>
    <property type="evidence" value="ECO:0007669"/>
    <property type="project" value="UniProtKB-ARBA"/>
</dbReference>
<dbReference type="GO" id="GO:0006486">
    <property type="term" value="P:protein glycosylation"/>
    <property type="evidence" value="ECO:0007669"/>
    <property type="project" value="UniProtKB-UniPathway"/>
</dbReference>
<dbReference type="FunFam" id="1.50.10.10:FF:000047">
    <property type="entry name" value="Mannosyl-oligosaccharide alpha-1,2-mannosidase"/>
    <property type="match status" value="1"/>
</dbReference>
<dbReference type="Gene3D" id="1.50.10.10">
    <property type="match status" value="1"/>
</dbReference>
<dbReference type="InterPro" id="IPR012341">
    <property type="entry name" value="6hp_glycosidase-like_sf"/>
</dbReference>
<dbReference type="InterPro" id="IPR001382">
    <property type="entry name" value="Glyco_hydro_47"/>
</dbReference>
<dbReference type="InterPro" id="IPR050749">
    <property type="entry name" value="Glycosyl_Hydrolase_47"/>
</dbReference>
<dbReference type="InterPro" id="IPR036026">
    <property type="entry name" value="Seven-hairpin_glycosidases"/>
</dbReference>
<dbReference type="PANTHER" id="PTHR11742:SF101">
    <property type="entry name" value="MANNOSYL-OLIGOSACCHARIDE ALPHA-1,2-MANNOSIDASE 1B"/>
    <property type="match status" value="1"/>
</dbReference>
<dbReference type="PANTHER" id="PTHR11742">
    <property type="entry name" value="MANNOSYL-OLIGOSACCHARIDE ALPHA-1,2-MANNOSIDASE-RELATED"/>
    <property type="match status" value="1"/>
</dbReference>
<dbReference type="Pfam" id="PF01532">
    <property type="entry name" value="Glyco_hydro_47"/>
    <property type="match status" value="1"/>
</dbReference>
<dbReference type="PRINTS" id="PR00747">
    <property type="entry name" value="GLYHDRLASE47"/>
</dbReference>
<dbReference type="SUPFAM" id="SSF48225">
    <property type="entry name" value="Seven-hairpin glycosidases"/>
    <property type="match status" value="1"/>
</dbReference>
<reference key="1">
    <citation type="journal article" date="1995" name="Biochim. Biophys. Acta">
        <title>Molecular cloning and nucleotide sequence of the genomic DNA for 1,2-alpha-D-mannosidase gene, msdC from Penicillium citrinum.</title>
        <authorList>
            <person name="Yoshida T."/>
            <person name="Ichishima E."/>
        </authorList>
    </citation>
    <scope>NUCLEOTIDE SEQUENCE [GENOMIC DNA]</scope>
    <scope>PARTIAL PROTEIN SEQUENCE</scope>
</reference>
<reference key="2">
    <citation type="journal article" date="1993" name="Biochem. J.">
        <title>1,2-alpha-D-mannosidase from Penicillium citrinum: molecular and enzymic properties of two isoenzymes.</title>
        <authorList>
            <person name="Yoshida T."/>
            <person name="Inoue T."/>
            <person name="Ichishima E."/>
        </authorList>
    </citation>
    <scope>PROTEIN SEQUENCE OF 36-49; 77-94 AND 405-415</scope>
    <scope>BIOPHYSICOCHEMICAL PROPERTIES</scope>
    <scope>FUNCTION</scope>
    <scope>CATALYTIC ACTIVITY</scope>
</reference>
<reference key="3">
    <citation type="journal article" date="2002" name="J. Biol. Chem.">
        <title>Structure of Penicillium citrinum alpha 1,2-mannosidase reveals the basis for differences in specificity of the endoplasmic reticulum and Golgi class I enzymes.</title>
        <authorList>
            <person name="Lobsanov Y.D."/>
            <person name="Vallee F."/>
            <person name="Imberty A."/>
            <person name="Yoshida T."/>
            <person name="Yip P."/>
            <person name="Herscovics A."/>
            <person name="Howell P.L."/>
        </authorList>
    </citation>
    <scope>X-RAY CRYSTALLOGRAPHY (2.20 ANGSTROMS) IN COMPLEX WITH SUBSTRATE</scope>
    <scope>GLYCOSYLATION AT ASN-182; ASN-366 AND ASN-438</scope>
    <scope>ACTIVE SITE</scope>
    <scope>SUBUNIT</scope>
    <scope>DISULFIDE BONDS</scope>
</reference>
<gene>
    <name type="primary">MSDC</name>
</gene>
<evidence type="ECO:0000250" key="1">
    <source>
        <dbReference type="UniProtKB" id="P32906"/>
    </source>
</evidence>
<evidence type="ECO:0000250" key="2">
    <source>
        <dbReference type="UniProtKB" id="P45700"/>
    </source>
</evidence>
<evidence type="ECO:0000269" key="3">
    <source>
    </source>
</evidence>
<evidence type="ECO:0000269" key="4">
    <source>
    </source>
</evidence>
<evidence type="ECO:0000305" key="5"/>
<evidence type="ECO:0000305" key="6">
    <source>
    </source>
</evidence>
<evidence type="ECO:0007744" key="7">
    <source>
        <dbReference type="PDB" id="1KKT"/>
    </source>
</evidence>
<evidence type="ECO:0007744" key="8">
    <source>
        <dbReference type="PDB" id="1KRE"/>
    </source>
</evidence>
<evidence type="ECO:0007744" key="9">
    <source>
        <dbReference type="PDB" id="1KRF"/>
    </source>
</evidence>
<evidence type="ECO:0007744" key="10">
    <source>
        <dbReference type="PDB" id="2RI8"/>
    </source>
</evidence>
<evidence type="ECO:0007744" key="11">
    <source>
        <dbReference type="PDB" id="2RI9"/>
    </source>
</evidence>
<evidence type="ECO:0007829" key="12">
    <source>
        <dbReference type="PDB" id="2RI8"/>
    </source>
</evidence>
<evidence type="ECO:0007829" key="13">
    <source>
        <dbReference type="PDB" id="2RI9"/>
    </source>
</evidence>
<keyword id="KW-0002">3D-structure</keyword>
<keyword id="KW-0903">Direct protein sequencing</keyword>
<keyword id="KW-1015">Disulfide bond</keyword>
<keyword id="KW-0325">Glycoprotein</keyword>
<keyword id="KW-0326">Glycosidase</keyword>
<keyword id="KW-0378">Hydrolase</keyword>
<keyword id="KW-0479">Metal-binding</keyword>
<keyword id="KW-0964">Secreted</keyword>
<keyword id="KW-0732">Signal</keyword>